<dbReference type="EMBL" id="BC126813">
    <property type="protein sequence ID" value="AAI26814.1"/>
    <property type="molecule type" value="mRNA"/>
</dbReference>
<dbReference type="RefSeq" id="NP_001073785.1">
    <property type="nucleotide sequence ID" value="NM_001080316.2"/>
</dbReference>
<dbReference type="SMR" id="A1A4Q8"/>
<dbReference type="FunCoup" id="A1A4Q8">
    <property type="interactions" value="2509"/>
</dbReference>
<dbReference type="STRING" id="9913.ENSBTAP00000027226"/>
<dbReference type="PaxDb" id="9913-ENSBTAP00000027226"/>
<dbReference type="GeneID" id="614626"/>
<dbReference type="KEGG" id="bta:614626"/>
<dbReference type="CTD" id="55588"/>
<dbReference type="eggNOG" id="ENOG502QRNJ">
    <property type="taxonomic scope" value="Eukaryota"/>
</dbReference>
<dbReference type="HOGENOM" id="CLU_101133_2_0_1"/>
<dbReference type="InParanoid" id="A1A4Q8"/>
<dbReference type="OMA" id="LCMQQCT"/>
<dbReference type="OrthoDB" id="6366949at2759"/>
<dbReference type="TreeFam" id="TF326632"/>
<dbReference type="Proteomes" id="UP000009136">
    <property type="component" value="Unplaced"/>
</dbReference>
<dbReference type="GO" id="GO:0016592">
    <property type="term" value="C:mediator complex"/>
    <property type="evidence" value="ECO:0000318"/>
    <property type="project" value="GO_Central"/>
</dbReference>
<dbReference type="GO" id="GO:0003712">
    <property type="term" value="F:transcription coregulator activity"/>
    <property type="evidence" value="ECO:0000318"/>
    <property type="project" value="GO_Central"/>
</dbReference>
<dbReference type="GO" id="GO:0006357">
    <property type="term" value="P:regulation of transcription by RNA polymerase II"/>
    <property type="evidence" value="ECO:0000318"/>
    <property type="project" value="GO_Central"/>
</dbReference>
<dbReference type="InterPro" id="IPR021018">
    <property type="entry name" value="Mediator_Med29_met"/>
</dbReference>
<dbReference type="PANTHER" id="PTHR28314">
    <property type="entry name" value="MEDIATOR OF RNA POLYMERASE II TRANSCRIPTION SUBUNIT 29"/>
    <property type="match status" value="1"/>
</dbReference>
<dbReference type="PANTHER" id="PTHR28314:SF1">
    <property type="entry name" value="MEDIATOR OF RNA POLYMERASE II TRANSCRIPTION SUBUNIT 29"/>
    <property type="match status" value="1"/>
</dbReference>
<dbReference type="Pfam" id="PF11568">
    <property type="entry name" value="Med29"/>
    <property type="match status" value="1"/>
</dbReference>
<sequence length="200" mass="21151">MAASQQQASATTSTASVSGPGSAGGSGPQQQPQPPAQLVGPAQSGLLQQQQQDFDPVQRYKMLIPQLKESLQTLMKVAAQNLIQNTNIDNGQKSSDGPIQRFDKCLEEFYALCDQLELCLRLAHECLSQSCDSAKHSPTLVPTATKPDAVQPDSLPYPQYLAVIKAQIACAKDIHTALLDCANKVTGKTPAPPTGPGGTL</sequence>
<protein>
    <recommendedName>
        <fullName>Mediator of RNA polymerase II transcription subunit 29</fullName>
    </recommendedName>
    <alternativeName>
        <fullName>Intersex-like protein</fullName>
    </alternativeName>
    <alternativeName>
        <fullName>Mediator complex subunit 29</fullName>
    </alternativeName>
</protein>
<organism>
    <name type="scientific">Bos taurus</name>
    <name type="common">Bovine</name>
    <dbReference type="NCBI Taxonomy" id="9913"/>
    <lineage>
        <taxon>Eukaryota</taxon>
        <taxon>Metazoa</taxon>
        <taxon>Chordata</taxon>
        <taxon>Craniata</taxon>
        <taxon>Vertebrata</taxon>
        <taxon>Euteleostomi</taxon>
        <taxon>Mammalia</taxon>
        <taxon>Eutheria</taxon>
        <taxon>Laurasiatheria</taxon>
        <taxon>Artiodactyla</taxon>
        <taxon>Ruminantia</taxon>
        <taxon>Pecora</taxon>
        <taxon>Bovidae</taxon>
        <taxon>Bovinae</taxon>
        <taxon>Bos</taxon>
    </lineage>
</organism>
<gene>
    <name type="primary">MED29</name>
    <name type="synonym">IXL</name>
</gene>
<name>MED29_BOVIN</name>
<feature type="initiator methionine" description="Removed" evidence="2">
    <location>
        <position position="1"/>
    </location>
</feature>
<feature type="chain" id="PRO_0000288057" description="Mediator of RNA polymerase II transcription subunit 29">
    <location>
        <begin position="2"/>
        <end position="200"/>
    </location>
</feature>
<feature type="region of interest" description="Disordered" evidence="3">
    <location>
        <begin position="1"/>
        <end position="48"/>
    </location>
</feature>
<feature type="compositionally biased region" description="Low complexity" evidence="3">
    <location>
        <begin position="1"/>
        <end position="20"/>
    </location>
</feature>
<feature type="compositionally biased region" description="Low complexity" evidence="3">
    <location>
        <begin position="36"/>
        <end position="48"/>
    </location>
</feature>
<feature type="modified residue" description="N-acetylalanine" evidence="2">
    <location>
        <position position="2"/>
    </location>
</feature>
<evidence type="ECO:0000250" key="1"/>
<evidence type="ECO:0000250" key="2">
    <source>
        <dbReference type="UniProtKB" id="Q9NX70"/>
    </source>
</evidence>
<evidence type="ECO:0000256" key="3">
    <source>
        <dbReference type="SAM" id="MobiDB-lite"/>
    </source>
</evidence>
<evidence type="ECO:0000305" key="4"/>
<proteinExistence type="evidence at transcript level"/>
<keyword id="KW-0007">Acetylation</keyword>
<keyword id="KW-0539">Nucleus</keyword>
<keyword id="KW-1185">Reference proteome</keyword>
<keyword id="KW-0804">Transcription</keyword>
<keyword id="KW-0805">Transcription regulation</keyword>
<reference key="1">
    <citation type="submission" date="2006-10" db="EMBL/GenBank/DDBJ databases">
        <authorList>
            <consortium name="NIH - Mammalian Gene Collection (MGC) project"/>
        </authorList>
    </citation>
    <scope>NUCLEOTIDE SEQUENCE [LARGE SCALE MRNA]</scope>
    <source>
        <strain>Hereford</strain>
        <tissue>Fetal medulla</tissue>
    </source>
</reference>
<comment type="function">
    <text evidence="1">Component of the mediator complex, a complex that can either repress or activate transcription. Mediator complexes are essential for basal and regulated expression of nearly all RNA polymerase II-dependent genes. They may act as a bridge, conveying regulatory information from enhancers and other control elements to the promoter (By similarity).</text>
</comment>
<comment type="subunit">
    <text evidence="1">Component of the TRAP/SMCC mediator complex. Interacts with MED20/TRFP. Associates with the MED18-MED20 heteromer (By similarity).</text>
</comment>
<comment type="subcellular location">
    <subcellularLocation>
        <location evidence="1">Nucleus</location>
    </subcellularLocation>
</comment>
<comment type="similarity">
    <text evidence="4">Belongs to the Mediator complex subunit 29 family.</text>
</comment>
<accession>A1A4Q8</accession>